<comment type="function">
    <text evidence="1">Pleiotropic ABC efflux transporter that may be involved in the modulation susceptibility to a wide range of unrelated cytotoxic compounds.</text>
</comment>
<comment type="catalytic activity">
    <reaction evidence="2">
        <text>itraconazole(in) + ATP + H2O = itraconazole(out) + ADP + phosphate + H(+)</text>
        <dbReference type="Rhea" id="RHEA:33503"/>
        <dbReference type="ChEBI" id="CHEBI:6076"/>
        <dbReference type="ChEBI" id="CHEBI:15377"/>
        <dbReference type="ChEBI" id="CHEBI:15378"/>
        <dbReference type="ChEBI" id="CHEBI:30616"/>
        <dbReference type="ChEBI" id="CHEBI:43474"/>
        <dbReference type="ChEBI" id="CHEBI:456216"/>
    </reaction>
    <physiologicalReaction direction="left-to-right" evidence="2">
        <dbReference type="Rhea" id="RHEA:33504"/>
    </physiologicalReaction>
</comment>
<comment type="subcellular location">
    <subcellularLocation>
        <location evidence="10">Cell membrane</location>
        <topology evidence="3">Multi-pass membrane protein</topology>
    </subcellularLocation>
</comment>
<comment type="induction">
    <text evidence="8">Expression is induced upon exposure to griseofulvin, the allylamine terbinafine, and the azole itraconazole.</text>
</comment>
<comment type="similarity">
    <text evidence="10">Belongs to the ABC transporter superfamily. ABCB family. Multidrug resistance exporter (TC 3.A.1.201) subfamily.</text>
</comment>
<comment type="sequence caution" evidence="10">
    <conflict type="erroneous gene model prediction">
        <sequence resource="EMBL-CDS" id="EGE04579"/>
    </conflict>
</comment>
<reference key="1">
    <citation type="journal article" date="2012" name="MBio">
        <title>Comparative genome analysis of Trichophyton rubrum and related dermatophytes reveals candidate genes involved in infection.</title>
        <authorList>
            <person name="Martinez D.A."/>
            <person name="Oliver B.G."/>
            <person name="Graeser Y."/>
            <person name="Goldberg J.M."/>
            <person name="Li W."/>
            <person name="Martinez-Rossi N.M."/>
            <person name="Monod M."/>
            <person name="Shelest E."/>
            <person name="Barton R.C."/>
            <person name="Birch E."/>
            <person name="Brakhage A.A."/>
            <person name="Chen Z."/>
            <person name="Gurr S.J."/>
            <person name="Heiman D."/>
            <person name="Heitman J."/>
            <person name="Kosti I."/>
            <person name="Rossi A."/>
            <person name="Saif S."/>
            <person name="Samalova M."/>
            <person name="Saunders C.W."/>
            <person name="Shea T."/>
            <person name="Summerbell R.C."/>
            <person name="Xu J."/>
            <person name="Young S."/>
            <person name="Zeng Q."/>
            <person name="Birren B.W."/>
            <person name="Cuomo C.A."/>
            <person name="White T.C."/>
        </authorList>
    </citation>
    <scope>NUCLEOTIDE SEQUENCE [LARGE SCALE GENOMIC DNA]</scope>
    <source>
        <strain>ATCC MYA-4606 / CBS 127.97</strain>
    </source>
</reference>
<reference key="2">
    <citation type="journal article" date="2016" name="J. Med. Microbiol.">
        <title>Compensatory expression of multidrug-resistance genes encoding ABC transporters in dermatophytes.</title>
        <authorList>
            <person name="Martins M.P."/>
            <person name="Franceschini A.C.C."/>
            <person name="Jacob T.R."/>
            <person name="Rossi A."/>
            <person name="Martinez-Rossi N.M."/>
        </authorList>
    </citation>
    <scope>INDUCTION</scope>
</reference>
<organism>
    <name type="scientific">Trichophyton equinum (strain ATCC MYA-4606 / CBS 127.97)</name>
    <name type="common">Horse ringworm fungus</name>
    <dbReference type="NCBI Taxonomy" id="559882"/>
    <lineage>
        <taxon>Eukaryota</taxon>
        <taxon>Fungi</taxon>
        <taxon>Dikarya</taxon>
        <taxon>Ascomycota</taxon>
        <taxon>Pezizomycotina</taxon>
        <taxon>Eurotiomycetes</taxon>
        <taxon>Eurotiomycetidae</taxon>
        <taxon>Onygenales</taxon>
        <taxon>Arthrodermataceae</taxon>
        <taxon>Trichophyton</taxon>
    </lineage>
</organism>
<sequence length="1331" mass="145322">MVEVSEKPNTQDDGVSKQENRNPASSSSSTSDKEKVAKKGNSDATKSSTPEDLDAQLAHLPEHEREILKQQLFIPDVKATYGTLFRYATRNDMIFLAIVSLASIAAGAALPLFTVLFGSLAGTFRDIALHRITYDEFNSILTRNSLYFVYLGIAQFILLYVSTVGFIYVGEHITQKIRAKYLHAILRQNIGFFDKLGAGEVTTRITADTNLIQDGISEKVGLTLTALSTFFSAFIIGYVRYWKLALICSSTIVAMILVMGGISRFVVKSGRMTLVSYGEGGTVAEEVISSIRNATAFGTQEKLARQYEVHLKEARKWGRRLQMMLGIMFGSMMAIMYSNYGLGFWMGSRFLVGGETDLSAIVNILLAIVIGSFSIGNVAPNTQAFASAISAGAKIFSTIDRVSAIDPGSDEGDTIENVEGTIEFRGIKHIYPSRPEVVVMEDINLVVPKGKTTALVGPSGSGKSTVVGLLERFYNPVSGSVLLDGRDIKTLNLRWLRQQISLVSQEPTLFGTTIFENIRLGLIGSPMENESEEQIKERIVSAAKEANAHDFIMGLPDGYATDVGQRGFLLSGGQKQRIAIARAIVSDPKILLLDEATSALDTKSEGVVQAALDAASRGRTTIVIAHRLSTIKSADNIVVIVGGRIAEQGTHDELVDKKGTYLQLVEAQKINEERGEESEDEAVLEKEKEISRQISVPAKSVNSGKYPDEDVEANLGRIDTKKSLSSVILSQKRSQENETEYSLGTLIRFIAGFNKPERLIMLCGFFFAVLSGAGQPVQSVFFAKGITTLSLPPSLYGKLREDANFWSLMFLMLGLVQLVTQSAQGVIFAICSESLIYRARSKSFRAMLRQDIAFFDLPENSTGALTSFLSTETKHLSGVSGATLGTILMVSTTLIVALTVALAFGWKLALVCISTVPVLLLCGFYRFWILAQFQTRAKKAYESSASYACEATSSIRTVASLTREQGVMEIYEGQLNDQAKKSLRSVAKSSLLYAASQSFSFFCLALGFWYGGGLLGKGEYNAFQFFLCISCVIFGSQSAGIVFSFSPDMGKAKSAAADFKRLFDRVPTIDIESPDGEKLETVEGTIEFRDVHFRYPTRPEQPVLRGLNLTVKPGQYIALVGPSGCGKSTTIALVERFYDTLSGGVYIDGKDISRLNVNSYRSHLALVSQEPTLYQGTIRDNVLLGVDRDELPDEQVFAACKAANIYDFIMSLPDGFGTVVGSKGSMLSGGQKQRIAIARALIRDPKVLLLDEATSALDSESEKVVQAALDAAAKGRTTIAVAHRLSTIQKADIIYVFDQGRIVESGTHHELLQNKGRYYELVHMQSLEKTQ</sequence>
<accession>F2PRR1</accession>
<feature type="chain" id="PRO_0000447181" description="ABC multidrug transporter MDR2">
    <location>
        <begin position="1"/>
        <end position="1331"/>
    </location>
</feature>
<feature type="transmembrane region" description="Helical" evidence="3 5">
    <location>
        <begin position="93"/>
        <end position="113"/>
    </location>
</feature>
<feature type="transmembrane region" description="Helical" evidence="3 5">
    <location>
        <begin position="147"/>
        <end position="167"/>
    </location>
</feature>
<feature type="transmembrane region" description="Helical" evidence="3 5">
    <location>
        <begin position="219"/>
        <end position="239"/>
    </location>
</feature>
<feature type="transmembrane region" description="Helical" evidence="3 5">
    <location>
        <begin position="242"/>
        <end position="262"/>
    </location>
</feature>
<feature type="transmembrane region" description="Helical" evidence="3 5">
    <location>
        <begin position="325"/>
        <end position="345"/>
    </location>
</feature>
<feature type="transmembrane region" description="Helical" evidence="3 5">
    <location>
        <begin position="358"/>
        <end position="378"/>
    </location>
</feature>
<feature type="transmembrane region" description="Helical" evidence="3 5">
    <location>
        <begin position="762"/>
        <end position="782"/>
    </location>
</feature>
<feature type="transmembrane region" description="Helical" evidence="3 5">
    <location>
        <begin position="810"/>
        <end position="830"/>
    </location>
</feature>
<feature type="transmembrane region" description="Helical" evidence="3 5">
    <location>
        <begin position="884"/>
        <end position="904"/>
    </location>
</feature>
<feature type="transmembrane region" description="Helical" evidence="3 5">
    <location>
        <begin position="910"/>
        <end position="930"/>
    </location>
</feature>
<feature type="transmembrane region" description="Helical" evidence="3 5">
    <location>
        <begin position="995"/>
        <end position="1015"/>
    </location>
</feature>
<feature type="transmembrane region" description="Helical" evidence="3 5">
    <location>
        <begin position="1025"/>
        <end position="1045"/>
    </location>
</feature>
<feature type="domain" description="ABC transmembrane type-1 1" evidence="5">
    <location>
        <begin position="97"/>
        <end position="387"/>
    </location>
</feature>
<feature type="domain" description="ABC transporter 1" evidence="4">
    <location>
        <begin position="422"/>
        <end position="667"/>
    </location>
</feature>
<feature type="domain" description="ABC transmembrane type-1 2" evidence="5">
    <location>
        <begin position="764"/>
        <end position="1051"/>
    </location>
</feature>
<feature type="domain" description="ABC transporter 2" evidence="4">
    <location>
        <begin position="1086"/>
        <end position="1324"/>
    </location>
</feature>
<feature type="region of interest" description="Disordered" evidence="7">
    <location>
        <begin position="1"/>
        <end position="51"/>
    </location>
</feature>
<feature type="compositionally biased region" description="Basic and acidic residues" evidence="7">
    <location>
        <begin position="1"/>
        <end position="20"/>
    </location>
</feature>
<feature type="compositionally biased region" description="Basic and acidic residues" evidence="7">
    <location>
        <begin position="31"/>
        <end position="41"/>
    </location>
</feature>
<feature type="binding site" evidence="4">
    <location>
        <begin position="457"/>
        <end position="464"/>
    </location>
    <ligand>
        <name>ATP</name>
        <dbReference type="ChEBI" id="CHEBI:30616"/>
    </ligand>
</feature>
<feature type="binding site" evidence="4">
    <location>
        <begin position="1121"/>
        <end position="1128"/>
    </location>
    <ligand>
        <name>ATP</name>
        <dbReference type="ChEBI" id="CHEBI:30616"/>
    </ligand>
</feature>
<feature type="glycosylation site" description="N-linked (GlcNAc...) asparagine" evidence="6">
    <location>
        <position position="293"/>
    </location>
</feature>
<feature type="glycosylation site" description="N-linked (GlcNAc...) asparagine" evidence="6">
    <location>
        <position position="529"/>
    </location>
</feature>
<feature type="glycosylation site" description="N-linked (GlcNAc...) asparagine" evidence="6">
    <location>
        <position position="737"/>
    </location>
</feature>
<feature type="glycosylation site" description="N-linked (GlcNAc...) asparagine" evidence="6">
    <location>
        <position position="860"/>
    </location>
</feature>
<feature type="glycosylation site" description="N-linked (GlcNAc...) asparagine" evidence="6">
    <location>
        <position position="1108"/>
    </location>
</feature>
<name>MDR2_TRIEC</name>
<protein>
    <recommendedName>
        <fullName evidence="9">ABC multidrug transporter MDR2</fullName>
    </recommendedName>
    <alternativeName>
        <fullName evidence="9">Multidrug resistance protein 2</fullName>
    </alternativeName>
</protein>
<keyword id="KW-0067">ATP-binding</keyword>
<keyword id="KW-1003">Cell membrane</keyword>
<keyword id="KW-0325">Glycoprotein</keyword>
<keyword id="KW-0472">Membrane</keyword>
<keyword id="KW-0547">Nucleotide-binding</keyword>
<keyword id="KW-0677">Repeat</keyword>
<keyword id="KW-0812">Transmembrane</keyword>
<keyword id="KW-1133">Transmembrane helix</keyword>
<keyword id="KW-0813">Transport</keyword>
<evidence type="ECO:0000250" key="1">
    <source>
        <dbReference type="UniProtKB" id="A0A059JJ46"/>
    </source>
</evidence>
<evidence type="ECO:0000250" key="2">
    <source>
        <dbReference type="UniProtKB" id="F2T1C4"/>
    </source>
</evidence>
<evidence type="ECO:0000255" key="3"/>
<evidence type="ECO:0000255" key="4">
    <source>
        <dbReference type="PROSITE-ProRule" id="PRU00434"/>
    </source>
</evidence>
<evidence type="ECO:0000255" key="5">
    <source>
        <dbReference type="PROSITE-ProRule" id="PRU00441"/>
    </source>
</evidence>
<evidence type="ECO:0000255" key="6">
    <source>
        <dbReference type="PROSITE-ProRule" id="PRU00498"/>
    </source>
</evidence>
<evidence type="ECO:0000256" key="7">
    <source>
        <dbReference type="SAM" id="MobiDB-lite"/>
    </source>
</evidence>
<evidence type="ECO:0000269" key="8">
    <source>
    </source>
</evidence>
<evidence type="ECO:0000303" key="9">
    <source>
    </source>
</evidence>
<evidence type="ECO:0000305" key="10"/>
<gene>
    <name evidence="9" type="primary">MDR2</name>
    <name type="ORF">TEQG_03450</name>
</gene>
<proteinExistence type="evidence at transcript level"/>
<dbReference type="EMBL" id="DS995734">
    <property type="protein sequence ID" value="EGE04579.1"/>
    <property type="status" value="ALT_SEQ"/>
    <property type="molecule type" value="Genomic_DNA"/>
</dbReference>
<dbReference type="SMR" id="F2PRR1"/>
<dbReference type="GlyCosmos" id="F2PRR1">
    <property type="glycosylation" value="5 sites, No reported glycans"/>
</dbReference>
<dbReference type="VEuPathDB" id="FungiDB:TEQG_03450"/>
<dbReference type="eggNOG" id="KOG0055">
    <property type="taxonomic scope" value="Eukaryota"/>
</dbReference>
<dbReference type="HOGENOM" id="CLU_000604_17_2_1"/>
<dbReference type="OrthoDB" id="2842at34384"/>
<dbReference type="Proteomes" id="UP000009169">
    <property type="component" value="Unassembled WGS sequence"/>
</dbReference>
<dbReference type="GO" id="GO:0005743">
    <property type="term" value="C:mitochondrial inner membrane"/>
    <property type="evidence" value="ECO:0007669"/>
    <property type="project" value="TreeGrafter"/>
</dbReference>
<dbReference type="GO" id="GO:0005886">
    <property type="term" value="C:plasma membrane"/>
    <property type="evidence" value="ECO:0007669"/>
    <property type="project" value="UniProtKB-SubCell"/>
</dbReference>
<dbReference type="GO" id="GO:0015421">
    <property type="term" value="F:ABC-type oligopeptide transporter activity"/>
    <property type="evidence" value="ECO:0007669"/>
    <property type="project" value="TreeGrafter"/>
</dbReference>
<dbReference type="GO" id="GO:0005524">
    <property type="term" value="F:ATP binding"/>
    <property type="evidence" value="ECO:0007669"/>
    <property type="project" value="UniProtKB-KW"/>
</dbReference>
<dbReference type="GO" id="GO:0016887">
    <property type="term" value="F:ATP hydrolysis activity"/>
    <property type="evidence" value="ECO:0007669"/>
    <property type="project" value="InterPro"/>
</dbReference>
<dbReference type="GO" id="GO:0090374">
    <property type="term" value="P:oligopeptide export from mitochondrion"/>
    <property type="evidence" value="ECO:0007669"/>
    <property type="project" value="TreeGrafter"/>
</dbReference>
<dbReference type="CDD" id="cd18577">
    <property type="entry name" value="ABC_6TM_Pgp_ABCB1_D1_like"/>
    <property type="match status" value="1"/>
</dbReference>
<dbReference type="CDD" id="cd18578">
    <property type="entry name" value="ABC_6TM_Pgp_ABCB1_D2_like"/>
    <property type="match status" value="1"/>
</dbReference>
<dbReference type="CDD" id="cd03249">
    <property type="entry name" value="ABC_MTABC3_MDL1_MDL2"/>
    <property type="match status" value="2"/>
</dbReference>
<dbReference type="FunFam" id="1.20.1560.10:FF:000102">
    <property type="entry name" value="ABC multidrug transporter Mdr1"/>
    <property type="match status" value="1"/>
</dbReference>
<dbReference type="FunFam" id="1.20.1560.10:FF:000009">
    <property type="entry name" value="ABC transporter B family member 1"/>
    <property type="match status" value="1"/>
</dbReference>
<dbReference type="FunFam" id="3.40.50.300:FF:000251">
    <property type="entry name" value="ABC transporter B family member 19"/>
    <property type="match status" value="1"/>
</dbReference>
<dbReference type="FunFam" id="3.40.50.300:FF:000302">
    <property type="entry name" value="ATP-binding cassette subfamily B member 5"/>
    <property type="match status" value="1"/>
</dbReference>
<dbReference type="Gene3D" id="1.20.1560.10">
    <property type="entry name" value="ABC transporter type 1, transmembrane domain"/>
    <property type="match status" value="1"/>
</dbReference>
<dbReference type="Gene3D" id="3.40.50.300">
    <property type="entry name" value="P-loop containing nucleotide triphosphate hydrolases"/>
    <property type="match status" value="2"/>
</dbReference>
<dbReference type="InterPro" id="IPR003593">
    <property type="entry name" value="AAA+_ATPase"/>
</dbReference>
<dbReference type="InterPro" id="IPR011527">
    <property type="entry name" value="ABC1_TM_dom"/>
</dbReference>
<dbReference type="InterPro" id="IPR036640">
    <property type="entry name" value="ABC1_TM_sf"/>
</dbReference>
<dbReference type="InterPro" id="IPR003439">
    <property type="entry name" value="ABC_transporter-like_ATP-bd"/>
</dbReference>
<dbReference type="InterPro" id="IPR017871">
    <property type="entry name" value="ABC_transporter-like_CS"/>
</dbReference>
<dbReference type="InterPro" id="IPR027417">
    <property type="entry name" value="P-loop_NTPase"/>
</dbReference>
<dbReference type="InterPro" id="IPR039421">
    <property type="entry name" value="Type_1_exporter"/>
</dbReference>
<dbReference type="PANTHER" id="PTHR43394:SF1">
    <property type="entry name" value="ATP-BINDING CASSETTE SUB-FAMILY B MEMBER 10, MITOCHONDRIAL"/>
    <property type="match status" value="1"/>
</dbReference>
<dbReference type="PANTHER" id="PTHR43394">
    <property type="entry name" value="ATP-DEPENDENT PERMEASE MDL1, MITOCHONDRIAL"/>
    <property type="match status" value="1"/>
</dbReference>
<dbReference type="Pfam" id="PF00664">
    <property type="entry name" value="ABC_membrane"/>
    <property type="match status" value="2"/>
</dbReference>
<dbReference type="Pfam" id="PF00005">
    <property type="entry name" value="ABC_tran"/>
    <property type="match status" value="2"/>
</dbReference>
<dbReference type="SMART" id="SM00382">
    <property type="entry name" value="AAA"/>
    <property type="match status" value="2"/>
</dbReference>
<dbReference type="SUPFAM" id="SSF90123">
    <property type="entry name" value="ABC transporter transmembrane region"/>
    <property type="match status" value="2"/>
</dbReference>
<dbReference type="SUPFAM" id="SSF52540">
    <property type="entry name" value="P-loop containing nucleoside triphosphate hydrolases"/>
    <property type="match status" value="2"/>
</dbReference>
<dbReference type="PROSITE" id="PS50929">
    <property type="entry name" value="ABC_TM1F"/>
    <property type="match status" value="2"/>
</dbReference>
<dbReference type="PROSITE" id="PS00211">
    <property type="entry name" value="ABC_TRANSPORTER_1"/>
    <property type="match status" value="2"/>
</dbReference>
<dbReference type="PROSITE" id="PS50893">
    <property type="entry name" value="ABC_TRANSPORTER_2"/>
    <property type="match status" value="2"/>
</dbReference>